<organism>
    <name type="scientific">Staphylothermus marinus (strain ATCC 43588 / DSM 3639 / JCM 9404 / F1)</name>
    <dbReference type="NCBI Taxonomy" id="399550"/>
    <lineage>
        <taxon>Archaea</taxon>
        <taxon>Thermoproteota</taxon>
        <taxon>Thermoprotei</taxon>
        <taxon>Desulfurococcales</taxon>
        <taxon>Desulfurococcaceae</taxon>
        <taxon>Staphylothermus</taxon>
    </lineage>
</organism>
<dbReference type="EC" id="2.3.1.234" evidence="1"/>
<dbReference type="EMBL" id="CP000575">
    <property type="protein sequence ID" value="ABN69939.1"/>
    <property type="molecule type" value="Genomic_DNA"/>
</dbReference>
<dbReference type="SMR" id="A3DMS9"/>
<dbReference type="STRING" id="399550.Smar_0838"/>
<dbReference type="KEGG" id="smr:Smar_0838"/>
<dbReference type="eggNOG" id="arCOG01183">
    <property type="taxonomic scope" value="Archaea"/>
</dbReference>
<dbReference type="HOGENOM" id="CLU_023208_2_2_2"/>
<dbReference type="Proteomes" id="UP000000254">
    <property type="component" value="Chromosome"/>
</dbReference>
<dbReference type="GO" id="GO:0005737">
    <property type="term" value="C:cytoplasm"/>
    <property type="evidence" value="ECO:0007669"/>
    <property type="project" value="UniProtKB-SubCell"/>
</dbReference>
<dbReference type="GO" id="GO:0000408">
    <property type="term" value="C:EKC/KEOPS complex"/>
    <property type="evidence" value="ECO:0007669"/>
    <property type="project" value="InterPro"/>
</dbReference>
<dbReference type="GO" id="GO:0005506">
    <property type="term" value="F:iron ion binding"/>
    <property type="evidence" value="ECO:0007669"/>
    <property type="project" value="UniProtKB-UniRule"/>
</dbReference>
<dbReference type="GO" id="GO:0061711">
    <property type="term" value="F:N(6)-L-threonylcarbamoyladenine synthase activity"/>
    <property type="evidence" value="ECO:0007669"/>
    <property type="project" value="UniProtKB-EC"/>
</dbReference>
<dbReference type="GO" id="GO:0002949">
    <property type="term" value="P:tRNA threonylcarbamoyladenosine modification"/>
    <property type="evidence" value="ECO:0007669"/>
    <property type="project" value="UniProtKB-UniRule"/>
</dbReference>
<dbReference type="Gene3D" id="3.30.420.40">
    <property type="match status" value="2"/>
</dbReference>
<dbReference type="HAMAP" id="MF_01446">
    <property type="entry name" value="Kae1"/>
    <property type="match status" value="1"/>
</dbReference>
<dbReference type="InterPro" id="IPR043129">
    <property type="entry name" value="ATPase_NBD"/>
</dbReference>
<dbReference type="InterPro" id="IPR000905">
    <property type="entry name" value="Gcp-like_dom"/>
</dbReference>
<dbReference type="InterPro" id="IPR017861">
    <property type="entry name" value="KAE1/TsaD"/>
</dbReference>
<dbReference type="InterPro" id="IPR034680">
    <property type="entry name" value="Kae1_archaea_euk"/>
</dbReference>
<dbReference type="NCBIfam" id="TIGR03722">
    <property type="entry name" value="arch_KAE1"/>
    <property type="match status" value="1"/>
</dbReference>
<dbReference type="NCBIfam" id="TIGR00329">
    <property type="entry name" value="gcp_kae1"/>
    <property type="match status" value="1"/>
</dbReference>
<dbReference type="PANTHER" id="PTHR11735">
    <property type="entry name" value="TRNA N6-ADENOSINE THREONYLCARBAMOYLTRANSFERASE"/>
    <property type="match status" value="1"/>
</dbReference>
<dbReference type="PANTHER" id="PTHR11735:SF14">
    <property type="entry name" value="TRNA N6-ADENOSINE THREONYLCARBAMOYLTRANSFERASE"/>
    <property type="match status" value="1"/>
</dbReference>
<dbReference type="Pfam" id="PF00814">
    <property type="entry name" value="TsaD"/>
    <property type="match status" value="1"/>
</dbReference>
<dbReference type="PRINTS" id="PR00789">
    <property type="entry name" value="OSIALOPTASE"/>
</dbReference>
<dbReference type="SUPFAM" id="SSF53067">
    <property type="entry name" value="Actin-like ATPase domain"/>
    <property type="match status" value="1"/>
</dbReference>
<keyword id="KW-0012">Acyltransferase</keyword>
<keyword id="KW-0963">Cytoplasm</keyword>
<keyword id="KW-0408">Iron</keyword>
<keyword id="KW-0479">Metal-binding</keyword>
<keyword id="KW-1185">Reference proteome</keyword>
<keyword id="KW-0808">Transferase</keyword>
<keyword id="KW-0819">tRNA processing</keyword>
<feature type="chain" id="PRO_0000303643" description="tRNA N6-adenosine threonylcarbamoyltransferase">
    <location>
        <begin position="1"/>
        <end position="338"/>
    </location>
</feature>
<feature type="binding site" evidence="1">
    <location>
        <position position="110"/>
    </location>
    <ligand>
        <name>Fe cation</name>
        <dbReference type="ChEBI" id="CHEBI:24875"/>
    </ligand>
</feature>
<feature type="binding site" evidence="1">
    <location>
        <position position="114"/>
    </location>
    <ligand>
        <name>Fe cation</name>
        <dbReference type="ChEBI" id="CHEBI:24875"/>
    </ligand>
</feature>
<feature type="binding site" evidence="1">
    <location>
        <begin position="131"/>
        <end position="135"/>
    </location>
    <ligand>
        <name>substrate</name>
    </ligand>
</feature>
<feature type="binding site" evidence="1">
    <location>
        <position position="131"/>
    </location>
    <ligand>
        <name>Fe cation</name>
        <dbReference type="ChEBI" id="CHEBI:24875"/>
    </ligand>
</feature>
<feature type="binding site" evidence="1">
    <location>
        <position position="163"/>
    </location>
    <ligand>
        <name>substrate</name>
    </ligand>
</feature>
<feature type="binding site" evidence="1">
    <location>
        <position position="184"/>
    </location>
    <ligand>
        <name>substrate</name>
    </ligand>
</feature>
<feature type="binding site" evidence="1">
    <location>
        <position position="268"/>
    </location>
    <ligand>
        <name>substrate</name>
    </ligand>
</feature>
<feature type="binding site" evidence="1">
    <location>
        <position position="296"/>
    </location>
    <ligand>
        <name>Fe cation</name>
        <dbReference type="ChEBI" id="CHEBI:24875"/>
    </ligand>
</feature>
<proteinExistence type="inferred from homology"/>
<protein>
    <recommendedName>
        <fullName evidence="1">tRNA N6-adenosine threonylcarbamoyltransferase</fullName>
        <ecNumber evidence="1">2.3.1.234</ecNumber>
    </recommendedName>
    <alternativeName>
        <fullName evidence="1">N6-L-threonylcarbamoyladenine synthase</fullName>
        <shortName evidence="1">t(6)A synthase</shortName>
    </alternativeName>
    <alternativeName>
        <fullName evidence="1">t(6)A37 threonylcarbamoyladenosine biosynthesis protein Kae1</fullName>
    </alternativeName>
    <alternativeName>
        <fullName evidence="1">tRNA threonylcarbamoyladenosine biosynthesis protein Kae1</fullName>
    </alternativeName>
</protein>
<comment type="function">
    <text evidence="1">Required for the formation of a threonylcarbamoyl group on adenosine at position 37 (t(6)A37) in tRNAs that read codons beginning with adenine. Is probably involved in the transfer of the threonylcarbamoyl moiety of threonylcarbamoyl-AMP (TC-AMP) to the N6 group of A37.</text>
</comment>
<comment type="catalytic activity">
    <reaction evidence="1">
        <text>L-threonylcarbamoyladenylate + adenosine(37) in tRNA = N(6)-L-threonylcarbamoyladenosine(37) in tRNA + AMP + H(+)</text>
        <dbReference type="Rhea" id="RHEA:37059"/>
        <dbReference type="Rhea" id="RHEA-COMP:10162"/>
        <dbReference type="Rhea" id="RHEA-COMP:10163"/>
        <dbReference type="ChEBI" id="CHEBI:15378"/>
        <dbReference type="ChEBI" id="CHEBI:73682"/>
        <dbReference type="ChEBI" id="CHEBI:74411"/>
        <dbReference type="ChEBI" id="CHEBI:74418"/>
        <dbReference type="ChEBI" id="CHEBI:456215"/>
        <dbReference type="EC" id="2.3.1.234"/>
    </reaction>
</comment>
<comment type="cofactor">
    <cofactor evidence="1">
        <name>Fe(2+)</name>
        <dbReference type="ChEBI" id="CHEBI:29033"/>
    </cofactor>
    <text evidence="1">Binds 1 Fe(2+) ion per subunit.</text>
</comment>
<comment type="subcellular location">
    <subcellularLocation>
        <location evidence="1">Cytoplasm</location>
    </subcellularLocation>
</comment>
<comment type="similarity">
    <text evidence="1">Belongs to the KAE1 / TsaD family.</text>
</comment>
<name>KAE1_STAMF</name>
<sequence>MGIESTSHTFGVGIVKYVSSINETRILANTYDKYIPEKGGIHPREAALHHARVAAKVLSDALQKANISMRDVSAIAVALGPGLGPCLRVGASLARFLSSYYNIPLIPVNHAVAHIEIGKFLFGFKDPLIIYVSGGNTLIAIQRKKRYRILGETLDIPIGNLLDTFAREIGLAPPYIVNGKHQVDICAEWGSEFISLPYTVKGSDLSFSGLLTAALSLAEKYIDNKKKLGNVCLSLRETAFNMLVEVAERSLVLAGKKEVLLVGGVASNKVLRKKLELMASLHGAKYAGTPPEYSGDNGAMIAYTGLLGYLHNVIVEPRKAFVRQRWRLDEVELPWIQD</sequence>
<reference key="1">
    <citation type="journal article" date="2009" name="BMC Genomics">
        <title>The complete genome sequence of Staphylothermus marinus reveals differences in sulfur metabolism among heterotrophic Crenarchaeota.</title>
        <authorList>
            <person name="Anderson I.J."/>
            <person name="Dharmarajan L."/>
            <person name="Rodriguez J."/>
            <person name="Hooper S."/>
            <person name="Porat I."/>
            <person name="Ulrich L.E."/>
            <person name="Elkins J.G."/>
            <person name="Mavromatis K."/>
            <person name="Sun H."/>
            <person name="Land M."/>
            <person name="Lapidus A."/>
            <person name="Lucas S."/>
            <person name="Barry K."/>
            <person name="Huber H."/>
            <person name="Zhulin I.B."/>
            <person name="Whitman W.B."/>
            <person name="Mukhopadhyay B."/>
            <person name="Woese C."/>
            <person name="Bristow J."/>
            <person name="Kyrpides N."/>
        </authorList>
    </citation>
    <scope>NUCLEOTIDE SEQUENCE [LARGE SCALE GENOMIC DNA]</scope>
    <source>
        <strain>ATCC 43588 / DSM 3639 / JCM 9404 / F1</strain>
    </source>
</reference>
<reference key="2">
    <citation type="journal article" date="2009" name="Stand. Genomic Sci.">
        <title>Complete genome sequence of Staphylothermus marinus Stetter and Fiala 1986 type strain F1.</title>
        <authorList>
            <person name="Anderson I.J."/>
            <person name="Sun H."/>
            <person name="Lapidus A."/>
            <person name="Copeland A."/>
            <person name="Glavina Del Rio T."/>
            <person name="Tice H."/>
            <person name="Dalin E."/>
            <person name="Lucas S."/>
            <person name="Barry K."/>
            <person name="Land M."/>
            <person name="Richardson P."/>
            <person name="Huber H."/>
            <person name="Kyrpides N.C."/>
        </authorList>
    </citation>
    <scope>NUCLEOTIDE SEQUENCE [LARGE SCALE GENOMIC DNA]</scope>
    <source>
        <strain>ATCC 43588 / DSM 3639 / JCM 9404 / F1</strain>
    </source>
</reference>
<gene>
    <name evidence="1" type="primary">kae1</name>
    <name type="ordered locus">Smar_0838</name>
</gene>
<evidence type="ECO:0000255" key="1">
    <source>
        <dbReference type="HAMAP-Rule" id="MF_01446"/>
    </source>
</evidence>
<accession>A3DMS9</accession>